<reference key="1">
    <citation type="journal article" date="2009" name="Nat. Genet.">
        <title>Comparative genomic and phylogeographic analysis of Mycobacterium leprae.</title>
        <authorList>
            <person name="Monot M."/>
            <person name="Honore N."/>
            <person name="Garnier T."/>
            <person name="Zidane N."/>
            <person name="Sherafi D."/>
            <person name="Paniz-Mondolfi A."/>
            <person name="Matsuoka M."/>
            <person name="Taylor G.M."/>
            <person name="Donoghue H.D."/>
            <person name="Bouwman A."/>
            <person name="Mays S."/>
            <person name="Watson C."/>
            <person name="Lockwood D."/>
            <person name="Khamispour A."/>
            <person name="Dowlati Y."/>
            <person name="Jianping S."/>
            <person name="Rea T.H."/>
            <person name="Vera-Cabrera L."/>
            <person name="Stefani M.M."/>
            <person name="Banu S."/>
            <person name="Macdonald M."/>
            <person name="Sapkota B.R."/>
            <person name="Spencer J.S."/>
            <person name="Thomas J."/>
            <person name="Harshman K."/>
            <person name="Singh P."/>
            <person name="Busso P."/>
            <person name="Gattiker A."/>
            <person name="Rougemont J."/>
            <person name="Brennan P.J."/>
            <person name="Cole S.T."/>
        </authorList>
    </citation>
    <scope>NUCLEOTIDE SEQUENCE [LARGE SCALE GENOMIC DNA]</scope>
    <source>
        <strain>Br4923</strain>
    </source>
</reference>
<comment type="function">
    <text evidence="1">This protein is one of the early assembly proteins of the 50S ribosomal subunit, although it is not seen to bind rRNA by itself. It is important during the early stages of 50S assembly.</text>
</comment>
<comment type="subunit">
    <text evidence="1">Part of the 50S ribosomal subunit.</text>
</comment>
<comment type="similarity">
    <text evidence="1">Belongs to the universal ribosomal protein uL13 family.</text>
</comment>
<feature type="chain" id="PRO_1000166877" description="Large ribosomal subunit protein uL13">
    <location>
        <begin position="1"/>
        <end position="147"/>
    </location>
</feature>
<name>RL13_MYCLB</name>
<evidence type="ECO:0000255" key="1">
    <source>
        <dbReference type="HAMAP-Rule" id="MF_01366"/>
    </source>
</evidence>
<evidence type="ECO:0000305" key="2"/>
<keyword id="KW-0687">Ribonucleoprotein</keyword>
<keyword id="KW-0689">Ribosomal protein</keyword>
<accession>B8ZUB9</accession>
<sequence>MPTYAPKAGDTTCSWYVIDATDVVLGRLAAVAATLLRGKHKPTFAPNVDGGDFVIVINADKVAISGDKVQHKMVYRHSGYPGGLRKRTIGELMQKHPDRVVEKAIVGMLPKNKLSRQIQRKLRVYAGPDHPHSAQQPVPFEIKQVAQ</sequence>
<gene>
    <name evidence="1" type="primary">rplM</name>
    <name type="ordered locus">MLBr00364</name>
</gene>
<proteinExistence type="inferred from homology"/>
<organism>
    <name type="scientific">Mycobacterium leprae (strain Br4923)</name>
    <dbReference type="NCBI Taxonomy" id="561304"/>
    <lineage>
        <taxon>Bacteria</taxon>
        <taxon>Bacillati</taxon>
        <taxon>Actinomycetota</taxon>
        <taxon>Actinomycetes</taxon>
        <taxon>Mycobacteriales</taxon>
        <taxon>Mycobacteriaceae</taxon>
        <taxon>Mycobacterium</taxon>
    </lineage>
</organism>
<dbReference type="EMBL" id="FM211192">
    <property type="protein sequence ID" value="CAR70457.1"/>
    <property type="molecule type" value="Genomic_DNA"/>
</dbReference>
<dbReference type="SMR" id="B8ZUB9"/>
<dbReference type="KEGG" id="mlb:MLBr00364"/>
<dbReference type="HOGENOM" id="CLU_082184_2_2_11"/>
<dbReference type="Proteomes" id="UP000006900">
    <property type="component" value="Chromosome"/>
</dbReference>
<dbReference type="GO" id="GO:0022625">
    <property type="term" value="C:cytosolic large ribosomal subunit"/>
    <property type="evidence" value="ECO:0007669"/>
    <property type="project" value="TreeGrafter"/>
</dbReference>
<dbReference type="GO" id="GO:0003729">
    <property type="term" value="F:mRNA binding"/>
    <property type="evidence" value="ECO:0007669"/>
    <property type="project" value="TreeGrafter"/>
</dbReference>
<dbReference type="GO" id="GO:0003735">
    <property type="term" value="F:structural constituent of ribosome"/>
    <property type="evidence" value="ECO:0007669"/>
    <property type="project" value="InterPro"/>
</dbReference>
<dbReference type="GO" id="GO:0017148">
    <property type="term" value="P:negative regulation of translation"/>
    <property type="evidence" value="ECO:0007669"/>
    <property type="project" value="TreeGrafter"/>
</dbReference>
<dbReference type="GO" id="GO:0006412">
    <property type="term" value="P:translation"/>
    <property type="evidence" value="ECO:0007669"/>
    <property type="project" value="UniProtKB-UniRule"/>
</dbReference>
<dbReference type="CDD" id="cd00392">
    <property type="entry name" value="Ribosomal_L13"/>
    <property type="match status" value="1"/>
</dbReference>
<dbReference type="FunFam" id="3.90.1180.10:FF:000001">
    <property type="entry name" value="50S ribosomal protein L13"/>
    <property type="match status" value="1"/>
</dbReference>
<dbReference type="Gene3D" id="3.90.1180.10">
    <property type="entry name" value="Ribosomal protein L13"/>
    <property type="match status" value="1"/>
</dbReference>
<dbReference type="HAMAP" id="MF_01366">
    <property type="entry name" value="Ribosomal_uL13"/>
    <property type="match status" value="1"/>
</dbReference>
<dbReference type="InterPro" id="IPR005822">
    <property type="entry name" value="Ribosomal_uL13"/>
</dbReference>
<dbReference type="InterPro" id="IPR005823">
    <property type="entry name" value="Ribosomal_uL13_bac-type"/>
</dbReference>
<dbReference type="InterPro" id="IPR023563">
    <property type="entry name" value="Ribosomal_uL13_CS"/>
</dbReference>
<dbReference type="InterPro" id="IPR036899">
    <property type="entry name" value="Ribosomal_uL13_sf"/>
</dbReference>
<dbReference type="NCBIfam" id="TIGR01066">
    <property type="entry name" value="rplM_bact"/>
    <property type="match status" value="1"/>
</dbReference>
<dbReference type="PANTHER" id="PTHR11545:SF2">
    <property type="entry name" value="LARGE RIBOSOMAL SUBUNIT PROTEIN UL13M"/>
    <property type="match status" value="1"/>
</dbReference>
<dbReference type="PANTHER" id="PTHR11545">
    <property type="entry name" value="RIBOSOMAL PROTEIN L13"/>
    <property type="match status" value="1"/>
</dbReference>
<dbReference type="Pfam" id="PF00572">
    <property type="entry name" value="Ribosomal_L13"/>
    <property type="match status" value="1"/>
</dbReference>
<dbReference type="PIRSF" id="PIRSF002181">
    <property type="entry name" value="Ribosomal_L13"/>
    <property type="match status" value="1"/>
</dbReference>
<dbReference type="SUPFAM" id="SSF52161">
    <property type="entry name" value="Ribosomal protein L13"/>
    <property type="match status" value="1"/>
</dbReference>
<dbReference type="PROSITE" id="PS00783">
    <property type="entry name" value="RIBOSOMAL_L13"/>
    <property type="match status" value="1"/>
</dbReference>
<protein>
    <recommendedName>
        <fullName evidence="1">Large ribosomal subunit protein uL13</fullName>
    </recommendedName>
    <alternativeName>
        <fullName evidence="2">50S ribosomal protein L13</fullName>
    </alternativeName>
</protein>